<gene>
    <name evidence="1" type="primary">glyA</name>
    <name type="ordered locus">CbuG_0597</name>
</gene>
<proteinExistence type="inferred from homology"/>
<sequence>MYEPTLTVESFDSELAGAIRDERRRQEHHVELIASENYVSPRVLELQGSVLTNKYAEGYPGRRYYAGCEFVDIAEQLAIDRAKELFGADYANVQPHSGSQANAEAYMALMNPGDTLLAMDLSHGGHLTHGSPVSFSGKFYKAVHYGLNAHGDIDYEQAAQLAQEHKPKVILAGFSAFSGIVDWQRFREIADSVNAYFMTDIAHVAGLVAAGVYPSPVQIADVTTTTTHKTLRGPRAGLILAKANPELEKRLNSAVFPGSQGGPLMHIIAAKAVAFKEAMQPEFKTYAQQILKNAKAMAEVMKERDYTIVSGGTQNHLFLVSLLNKNISGKEAEAALGRANITVNKNTVPGETRSPFVTSGLRIGTPAITTRGFKEKEASQLAHWVCDILDDIHNEKVIADVKQKAHELCGKFPVYQELD</sequence>
<dbReference type="EC" id="2.1.2.1" evidence="1"/>
<dbReference type="EMBL" id="CP001019">
    <property type="protein sequence ID" value="ACJ18008.1"/>
    <property type="molecule type" value="Genomic_DNA"/>
</dbReference>
<dbReference type="RefSeq" id="WP_012569839.1">
    <property type="nucleotide sequence ID" value="NC_011527.1"/>
</dbReference>
<dbReference type="SMR" id="B6IZ80"/>
<dbReference type="KEGG" id="cbg:CbuG_0597"/>
<dbReference type="HOGENOM" id="CLU_022477_2_1_6"/>
<dbReference type="UniPathway" id="UPA00193"/>
<dbReference type="UniPathway" id="UPA00288">
    <property type="reaction ID" value="UER01023"/>
</dbReference>
<dbReference type="GO" id="GO:0005829">
    <property type="term" value="C:cytosol"/>
    <property type="evidence" value="ECO:0007669"/>
    <property type="project" value="TreeGrafter"/>
</dbReference>
<dbReference type="GO" id="GO:0004372">
    <property type="term" value="F:glycine hydroxymethyltransferase activity"/>
    <property type="evidence" value="ECO:0007669"/>
    <property type="project" value="UniProtKB-UniRule"/>
</dbReference>
<dbReference type="GO" id="GO:0030170">
    <property type="term" value="F:pyridoxal phosphate binding"/>
    <property type="evidence" value="ECO:0007669"/>
    <property type="project" value="UniProtKB-UniRule"/>
</dbReference>
<dbReference type="GO" id="GO:0019264">
    <property type="term" value="P:glycine biosynthetic process from serine"/>
    <property type="evidence" value="ECO:0007669"/>
    <property type="project" value="UniProtKB-UniRule"/>
</dbReference>
<dbReference type="GO" id="GO:0035999">
    <property type="term" value="P:tetrahydrofolate interconversion"/>
    <property type="evidence" value="ECO:0007669"/>
    <property type="project" value="UniProtKB-UniRule"/>
</dbReference>
<dbReference type="CDD" id="cd00378">
    <property type="entry name" value="SHMT"/>
    <property type="match status" value="1"/>
</dbReference>
<dbReference type="FunFam" id="3.40.640.10:FF:000001">
    <property type="entry name" value="Serine hydroxymethyltransferase"/>
    <property type="match status" value="1"/>
</dbReference>
<dbReference type="FunFam" id="3.90.1150.10:FF:000003">
    <property type="entry name" value="Serine hydroxymethyltransferase"/>
    <property type="match status" value="1"/>
</dbReference>
<dbReference type="Gene3D" id="3.90.1150.10">
    <property type="entry name" value="Aspartate Aminotransferase, domain 1"/>
    <property type="match status" value="1"/>
</dbReference>
<dbReference type="Gene3D" id="3.40.640.10">
    <property type="entry name" value="Type I PLP-dependent aspartate aminotransferase-like (Major domain)"/>
    <property type="match status" value="1"/>
</dbReference>
<dbReference type="HAMAP" id="MF_00051">
    <property type="entry name" value="SHMT"/>
    <property type="match status" value="1"/>
</dbReference>
<dbReference type="InterPro" id="IPR015424">
    <property type="entry name" value="PyrdxlP-dep_Trfase"/>
</dbReference>
<dbReference type="InterPro" id="IPR015421">
    <property type="entry name" value="PyrdxlP-dep_Trfase_major"/>
</dbReference>
<dbReference type="InterPro" id="IPR015422">
    <property type="entry name" value="PyrdxlP-dep_Trfase_small"/>
</dbReference>
<dbReference type="InterPro" id="IPR001085">
    <property type="entry name" value="Ser_HO-MeTrfase"/>
</dbReference>
<dbReference type="InterPro" id="IPR049943">
    <property type="entry name" value="Ser_HO-MeTrfase-like"/>
</dbReference>
<dbReference type="InterPro" id="IPR019798">
    <property type="entry name" value="Ser_HO-MeTrfase_PLP_BS"/>
</dbReference>
<dbReference type="InterPro" id="IPR039429">
    <property type="entry name" value="SHMT-like_dom"/>
</dbReference>
<dbReference type="NCBIfam" id="NF000586">
    <property type="entry name" value="PRK00011.1"/>
    <property type="match status" value="1"/>
</dbReference>
<dbReference type="PANTHER" id="PTHR11680">
    <property type="entry name" value="SERINE HYDROXYMETHYLTRANSFERASE"/>
    <property type="match status" value="1"/>
</dbReference>
<dbReference type="PANTHER" id="PTHR11680:SF50">
    <property type="entry name" value="SERINE HYDROXYMETHYLTRANSFERASE"/>
    <property type="match status" value="1"/>
</dbReference>
<dbReference type="Pfam" id="PF00464">
    <property type="entry name" value="SHMT"/>
    <property type="match status" value="1"/>
</dbReference>
<dbReference type="PIRSF" id="PIRSF000412">
    <property type="entry name" value="SHMT"/>
    <property type="match status" value="1"/>
</dbReference>
<dbReference type="SUPFAM" id="SSF53383">
    <property type="entry name" value="PLP-dependent transferases"/>
    <property type="match status" value="1"/>
</dbReference>
<dbReference type="PROSITE" id="PS00096">
    <property type="entry name" value="SHMT"/>
    <property type="match status" value="1"/>
</dbReference>
<accession>B6IZ80</accession>
<name>GLYA_COXB2</name>
<organism>
    <name type="scientific">Coxiella burnetii (strain CbuG_Q212)</name>
    <name type="common">Coxiella burnetii (strain Q212)</name>
    <dbReference type="NCBI Taxonomy" id="434923"/>
    <lineage>
        <taxon>Bacteria</taxon>
        <taxon>Pseudomonadati</taxon>
        <taxon>Pseudomonadota</taxon>
        <taxon>Gammaproteobacteria</taxon>
        <taxon>Legionellales</taxon>
        <taxon>Coxiellaceae</taxon>
        <taxon>Coxiella</taxon>
    </lineage>
</organism>
<protein>
    <recommendedName>
        <fullName evidence="1">Serine hydroxymethyltransferase</fullName>
        <shortName evidence="1">SHMT</shortName>
        <shortName evidence="1">Serine methylase</shortName>
        <ecNumber evidence="1">2.1.2.1</ecNumber>
    </recommendedName>
</protein>
<keyword id="KW-0028">Amino-acid biosynthesis</keyword>
<keyword id="KW-0963">Cytoplasm</keyword>
<keyword id="KW-0554">One-carbon metabolism</keyword>
<keyword id="KW-0663">Pyridoxal phosphate</keyword>
<keyword id="KW-0808">Transferase</keyword>
<comment type="function">
    <text evidence="1">Catalyzes the reversible interconversion of serine and glycine with tetrahydrofolate (THF) serving as the one-carbon carrier. This reaction serves as the major source of one-carbon groups required for the biosynthesis of purines, thymidylate, methionine, and other important biomolecules. Also exhibits THF-independent aldolase activity toward beta-hydroxyamino acids, producing glycine and aldehydes, via a retro-aldol mechanism.</text>
</comment>
<comment type="catalytic activity">
    <reaction evidence="1">
        <text>(6R)-5,10-methylene-5,6,7,8-tetrahydrofolate + glycine + H2O = (6S)-5,6,7,8-tetrahydrofolate + L-serine</text>
        <dbReference type="Rhea" id="RHEA:15481"/>
        <dbReference type="ChEBI" id="CHEBI:15377"/>
        <dbReference type="ChEBI" id="CHEBI:15636"/>
        <dbReference type="ChEBI" id="CHEBI:33384"/>
        <dbReference type="ChEBI" id="CHEBI:57305"/>
        <dbReference type="ChEBI" id="CHEBI:57453"/>
        <dbReference type="EC" id="2.1.2.1"/>
    </reaction>
</comment>
<comment type="cofactor">
    <cofactor evidence="1">
        <name>pyridoxal 5'-phosphate</name>
        <dbReference type="ChEBI" id="CHEBI:597326"/>
    </cofactor>
</comment>
<comment type="pathway">
    <text evidence="1">One-carbon metabolism; tetrahydrofolate interconversion.</text>
</comment>
<comment type="pathway">
    <text evidence="1">Amino-acid biosynthesis; glycine biosynthesis; glycine from L-serine: step 1/1.</text>
</comment>
<comment type="subunit">
    <text evidence="1">Homodimer.</text>
</comment>
<comment type="subcellular location">
    <subcellularLocation>
        <location evidence="1">Cytoplasm</location>
    </subcellularLocation>
</comment>
<comment type="similarity">
    <text evidence="1">Belongs to the SHMT family.</text>
</comment>
<feature type="chain" id="PRO_1000091534" description="Serine hydroxymethyltransferase">
    <location>
        <begin position="1"/>
        <end position="419"/>
    </location>
</feature>
<feature type="binding site" evidence="1">
    <location>
        <position position="121"/>
    </location>
    <ligand>
        <name>(6S)-5,6,7,8-tetrahydrofolate</name>
        <dbReference type="ChEBI" id="CHEBI:57453"/>
    </ligand>
</feature>
<feature type="binding site" evidence="1">
    <location>
        <begin position="125"/>
        <end position="127"/>
    </location>
    <ligand>
        <name>(6S)-5,6,7,8-tetrahydrofolate</name>
        <dbReference type="ChEBI" id="CHEBI:57453"/>
    </ligand>
</feature>
<feature type="binding site" evidence="1">
    <location>
        <begin position="354"/>
        <end position="356"/>
    </location>
    <ligand>
        <name>(6S)-5,6,7,8-tetrahydrofolate</name>
        <dbReference type="ChEBI" id="CHEBI:57453"/>
    </ligand>
</feature>
<feature type="site" description="Plays an important role in substrate specificity" evidence="1">
    <location>
        <position position="228"/>
    </location>
</feature>
<feature type="modified residue" description="N6-(pyridoxal phosphate)lysine" evidence="1">
    <location>
        <position position="229"/>
    </location>
</feature>
<evidence type="ECO:0000255" key="1">
    <source>
        <dbReference type="HAMAP-Rule" id="MF_00051"/>
    </source>
</evidence>
<reference key="1">
    <citation type="journal article" date="2009" name="Infect. Immun.">
        <title>Comparative genomics reveal extensive transposon-mediated genomic plasticity and diversity among potential effector proteins within the genus Coxiella.</title>
        <authorList>
            <person name="Beare P.A."/>
            <person name="Unsworth N."/>
            <person name="Andoh M."/>
            <person name="Voth D.E."/>
            <person name="Omsland A."/>
            <person name="Gilk S.D."/>
            <person name="Williams K.P."/>
            <person name="Sobral B.W."/>
            <person name="Kupko J.J. III"/>
            <person name="Porcella S.F."/>
            <person name="Samuel J.E."/>
            <person name="Heinzen R.A."/>
        </authorList>
    </citation>
    <scope>NUCLEOTIDE SEQUENCE [LARGE SCALE GENOMIC DNA]</scope>
    <source>
        <strain>CbuG_Q212</strain>
    </source>
</reference>